<organism>
    <name type="scientific">Shewanella piezotolerans (strain WP3 / JCM 13877)</name>
    <dbReference type="NCBI Taxonomy" id="225849"/>
    <lineage>
        <taxon>Bacteria</taxon>
        <taxon>Pseudomonadati</taxon>
        <taxon>Pseudomonadota</taxon>
        <taxon>Gammaproteobacteria</taxon>
        <taxon>Alteromonadales</taxon>
        <taxon>Shewanellaceae</taxon>
        <taxon>Shewanella</taxon>
    </lineage>
</organism>
<comment type="function">
    <text evidence="1">Master enzyme that delivers sulfur to a number of partners involved in Fe-S cluster assembly, tRNA modification or cofactor biosynthesis. Catalyzes the removal of elemental sulfur atoms from cysteine to produce alanine. Functions as a sulfur delivery protein for Fe-S cluster synthesis onto IscU, an Fe-S scaffold assembly protein, as well as other S acceptor proteins.</text>
</comment>
<comment type="catalytic activity">
    <reaction evidence="1">
        <text>(sulfur carrier)-H + L-cysteine = (sulfur carrier)-SH + L-alanine</text>
        <dbReference type="Rhea" id="RHEA:43892"/>
        <dbReference type="Rhea" id="RHEA-COMP:14737"/>
        <dbReference type="Rhea" id="RHEA-COMP:14739"/>
        <dbReference type="ChEBI" id="CHEBI:29917"/>
        <dbReference type="ChEBI" id="CHEBI:35235"/>
        <dbReference type="ChEBI" id="CHEBI:57972"/>
        <dbReference type="ChEBI" id="CHEBI:64428"/>
        <dbReference type="EC" id="2.8.1.7"/>
    </reaction>
</comment>
<comment type="cofactor">
    <cofactor evidence="1">
        <name>pyridoxal 5'-phosphate</name>
        <dbReference type="ChEBI" id="CHEBI:597326"/>
    </cofactor>
</comment>
<comment type="pathway">
    <text evidence="1">Cofactor biosynthesis; iron-sulfur cluster biosynthesis.</text>
</comment>
<comment type="subunit">
    <text evidence="1">Homodimer. Forms a heterotetramer with IscU, interacts with other sulfur acceptors.</text>
</comment>
<comment type="subcellular location">
    <subcellularLocation>
        <location evidence="1">Cytoplasm</location>
    </subcellularLocation>
</comment>
<comment type="similarity">
    <text evidence="1">Belongs to the class-V pyridoxal-phosphate-dependent aminotransferase family. NifS/IscS subfamily.</text>
</comment>
<dbReference type="EC" id="2.8.1.7" evidence="1"/>
<dbReference type="EMBL" id="CP000472">
    <property type="protein sequence ID" value="ACJ28467.1"/>
    <property type="molecule type" value="Genomic_DNA"/>
</dbReference>
<dbReference type="RefSeq" id="WP_020911845.1">
    <property type="nucleotide sequence ID" value="NC_011566.1"/>
</dbReference>
<dbReference type="SMR" id="B8CMW5"/>
<dbReference type="STRING" id="225849.swp_1694"/>
<dbReference type="KEGG" id="swp:swp_1694"/>
<dbReference type="eggNOG" id="COG1104">
    <property type="taxonomic scope" value="Bacteria"/>
</dbReference>
<dbReference type="HOGENOM" id="CLU_003433_0_2_6"/>
<dbReference type="OrthoDB" id="9808002at2"/>
<dbReference type="UniPathway" id="UPA00266"/>
<dbReference type="Proteomes" id="UP000000753">
    <property type="component" value="Chromosome"/>
</dbReference>
<dbReference type="GO" id="GO:1990221">
    <property type="term" value="C:L-cysteine desulfurase complex"/>
    <property type="evidence" value="ECO:0007669"/>
    <property type="project" value="UniProtKB-ARBA"/>
</dbReference>
<dbReference type="GO" id="GO:0051537">
    <property type="term" value="F:2 iron, 2 sulfur cluster binding"/>
    <property type="evidence" value="ECO:0007669"/>
    <property type="project" value="UniProtKB-UniRule"/>
</dbReference>
<dbReference type="GO" id="GO:0031071">
    <property type="term" value="F:cysteine desulfurase activity"/>
    <property type="evidence" value="ECO:0007669"/>
    <property type="project" value="UniProtKB-UniRule"/>
</dbReference>
<dbReference type="GO" id="GO:0046872">
    <property type="term" value="F:metal ion binding"/>
    <property type="evidence" value="ECO:0007669"/>
    <property type="project" value="UniProtKB-KW"/>
</dbReference>
<dbReference type="GO" id="GO:0030170">
    <property type="term" value="F:pyridoxal phosphate binding"/>
    <property type="evidence" value="ECO:0007669"/>
    <property type="project" value="UniProtKB-UniRule"/>
</dbReference>
<dbReference type="GO" id="GO:0044571">
    <property type="term" value="P:[2Fe-2S] cluster assembly"/>
    <property type="evidence" value="ECO:0007669"/>
    <property type="project" value="UniProtKB-UniRule"/>
</dbReference>
<dbReference type="FunFam" id="3.40.640.10:FF:000003">
    <property type="entry name" value="Cysteine desulfurase IscS"/>
    <property type="match status" value="1"/>
</dbReference>
<dbReference type="FunFam" id="3.90.1150.10:FF:000002">
    <property type="entry name" value="Cysteine desulfurase IscS"/>
    <property type="match status" value="1"/>
</dbReference>
<dbReference type="Gene3D" id="3.90.1150.10">
    <property type="entry name" value="Aspartate Aminotransferase, domain 1"/>
    <property type="match status" value="1"/>
</dbReference>
<dbReference type="Gene3D" id="3.40.640.10">
    <property type="entry name" value="Type I PLP-dependent aspartate aminotransferase-like (Major domain)"/>
    <property type="match status" value="1"/>
</dbReference>
<dbReference type="HAMAP" id="MF_00331">
    <property type="entry name" value="Cys_desulf_IscS"/>
    <property type="match status" value="1"/>
</dbReference>
<dbReference type="InterPro" id="IPR000192">
    <property type="entry name" value="Aminotrans_V_dom"/>
</dbReference>
<dbReference type="InterPro" id="IPR020578">
    <property type="entry name" value="Aminotrans_V_PyrdxlP_BS"/>
</dbReference>
<dbReference type="InterPro" id="IPR010240">
    <property type="entry name" value="Cys_deSase_IscS"/>
</dbReference>
<dbReference type="InterPro" id="IPR016454">
    <property type="entry name" value="Cysteine_dSase"/>
</dbReference>
<dbReference type="InterPro" id="IPR015424">
    <property type="entry name" value="PyrdxlP-dep_Trfase"/>
</dbReference>
<dbReference type="InterPro" id="IPR015421">
    <property type="entry name" value="PyrdxlP-dep_Trfase_major"/>
</dbReference>
<dbReference type="InterPro" id="IPR015422">
    <property type="entry name" value="PyrdxlP-dep_Trfase_small"/>
</dbReference>
<dbReference type="NCBIfam" id="TIGR02006">
    <property type="entry name" value="IscS"/>
    <property type="match status" value="1"/>
</dbReference>
<dbReference type="NCBIfam" id="NF002806">
    <property type="entry name" value="PRK02948.1"/>
    <property type="match status" value="1"/>
</dbReference>
<dbReference type="NCBIfam" id="NF010611">
    <property type="entry name" value="PRK14012.1"/>
    <property type="match status" value="1"/>
</dbReference>
<dbReference type="PANTHER" id="PTHR11601:SF34">
    <property type="entry name" value="CYSTEINE DESULFURASE"/>
    <property type="match status" value="1"/>
</dbReference>
<dbReference type="PANTHER" id="PTHR11601">
    <property type="entry name" value="CYSTEINE DESULFURYLASE FAMILY MEMBER"/>
    <property type="match status" value="1"/>
</dbReference>
<dbReference type="Pfam" id="PF00266">
    <property type="entry name" value="Aminotran_5"/>
    <property type="match status" value="1"/>
</dbReference>
<dbReference type="PIRSF" id="PIRSF005572">
    <property type="entry name" value="NifS"/>
    <property type="match status" value="1"/>
</dbReference>
<dbReference type="SUPFAM" id="SSF53383">
    <property type="entry name" value="PLP-dependent transferases"/>
    <property type="match status" value="1"/>
</dbReference>
<dbReference type="PROSITE" id="PS00595">
    <property type="entry name" value="AA_TRANSFER_CLASS_5"/>
    <property type="match status" value="1"/>
</dbReference>
<gene>
    <name evidence="1" type="primary">iscS</name>
    <name type="ordered locus">swp_1694</name>
</gene>
<reference key="1">
    <citation type="journal article" date="2008" name="PLoS ONE">
        <title>Environmental adaptation: genomic analysis of the piezotolerant and psychrotolerant deep-sea iron reducing bacterium Shewanella piezotolerans WP3.</title>
        <authorList>
            <person name="Wang F."/>
            <person name="Wang J."/>
            <person name="Jian H."/>
            <person name="Zhang B."/>
            <person name="Li S."/>
            <person name="Wang F."/>
            <person name="Zeng X."/>
            <person name="Gao L."/>
            <person name="Bartlett D.H."/>
            <person name="Yu J."/>
            <person name="Hu S."/>
            <person name="Xiao X."/>
        </authorList>
    </citation>
    <scope>NUCLEOTIDE SEQUENCE [LARGE SCALE GENOMIC DNA]</scope>
    <source>
        <strain>WP3 / JCM 13877</strain>
    </source>
</reference>
<sequence length="404" mass="44882">MKLPIYLDYAATTPVDPRVAEKMMQCMTMDGIFGNPASRSHRYGWQAEEAVDIARNQIAELINADPREIVFTSGATESDNLAIKGVAHFYQKKGKHIITSKTEHKAVLDTCRQLEREGYEVTYLQPEANGLIPVAMIEAAMREDTLLVSIMQVNNEIGVIQDIDAIGELCRSRKIVFHVDAAQSAGKMPIDVQKTKVDLMSISAHKMYGPKGIGALYVSRKPRIRLEAAMHGGGHERGMRSGTLATHQIVGFGEAAAIAKTDMDSDNERIRRLRDKLWNGINHIEETYINGDMEQRHCGSLNVSFNFVEGESLMMALKDLAVSSGSACTSASLEPSYVLRALGLNDEMAHSSIRFSIGRFTTDEEIEHAIETITESIGNLREMSPLWEMFKDGIDLDSVQWAHH</sequence>
<keyword id="KW-0001">2Fe-2S</keyword>
<keyword id="KW-0963">Cytoplasm</keyword>
<keyword id="KW-0408">Iron</keyword>
<keyword id="KW-0411">Iron-sulfur</keyword>
<keyword id="KW-0479">Metal-binding</keyword>
<keyword id="KW-0663">Pyridoxal phosphate</keyword>
<keyword id="KW-0808">Transferase</keyword>
<name>ISCS_SHEPW</name>
<feature type="chain" id="PRO_1000119648" description="Cysteine desulfurase IscS">
    <location>
        <begin position="1"/>
        <end position="404"/>
    </location>
</feature>
<feature type="active site" description="Cysteine persulfide intermediate" evidence="1">
    <location>
        <position position="328"/>
    </location>
</feature>
<feature type="binding site" evidence="1">
    <location>
        <begin position="75"/>
        <end position="76"/>
    </location>
    <ligand>
        <name>pyridoxal 5'-phosphate</name>
        <dbReference type="ChEBI" id="CHEBI:597326"/>
    </ligand>
</feature>
<feature type="binding site" evidence="1">
    <location>
        <position position="155"/>
    </location>
    <ligand>
        <name>pyridoxal 5'-phosphate</name>
        <dbReference type="ChEBI" id="CHEBI:597326"/>
    </ligand>
</feature>
<feature type="binding site" evidence="1">
    <location>
        <position position="183"/>
    </location>
    <ligand>
        <name>pyridoxal 5'-phosphate</name>
        <dbReference type="ChEBI" id="CHEBI:597326"/>
    </ligand>
</feature>
<feature type="binding site" evidence="1">
    <location>
        <begin position="203"/>
        <end position="205"/>
    </location>
    <ligand>
        <name>pyridoxal 5'-phosphate</name>
        <dbReference type="ChEBI" id="CHEBI:597326"/>
    </ligand>
</feature>
<feature type="binding site" evidence="1">
    <location>
        <position position="243"/>
    </location>
    <ligand>
        <name>pyridoxal 5'-phosphate</name>
        <dbReference type="ChEBI" id="CHEBI:597326"/>
    </ligand>
</feature>
<feature type="binding site" description="via persulfide group" evidence="1">
    <location>
        <position position="328"/>
    </location>
    <ligand>
        <name>[2Fe-2S] cluster</name>
        <dbReference type="ChEBI" id="CHEBI:190135"/>
        <note>ligand shared with IscU</note>
    </ligand>
</feature>
<feature type="modified residue" description="N6-(pyridoxal phosphate)lysine" evidence="1">
    <location>
        <position position="206"/>
    </location>
</feature>
<protein>
    <recommendedName>
        <fullName evidence="1">Cysteine desulfurase IscS</fullName>
        <ecNumber evidence="1">2.8.1.7</ecNumber>
    </recommendedName>
</protein>
<accession>B8CMW5</accession>
<proteinExistence type="inferred from homology"/>
<evidence type="ECO:0000255" key="1">
    <source>
        <dbReference type="HAMAP-Rule" id="MF_00331"/>
    </source>
</evidence>